<organismHost>
    <name type="scientific">Beta vulgaris</name>
    <name type="common">Sugar beet</name>
    <dbReference type="NCBI Taxonomy" id="161934"/>
</organismHost>
<organismHost>
    <name type="scientific">Capsicum annuum</name>
    <name type="common">Capsicum pepper</name>
    <dbReference type="NCBI Taxonomy" id="4072"/>
</organismHost>
<organismHost>
    <name type="scientific">Hyacinthus</name>
    <dbReference type="NCBI Taxonomy" id="82024"/>
</organismHost>
<organismHost>
    <name type="scientific">Narcissus pseudonarcissus</name>
    <name type="common">Daffodil</name>
    <dbReference type="NCBI Taxonomy" id="39639"/>
</organismHost>
<organismHost>
    <name type="scientific">Nicotiana tabacum</name>
    <name type="common">Common tobacco</name>
    <dbReference type="NCBI Taxonomy" id="4097"/>
</organismHost>
<organismHost>
    <name type="scientific">Solanum tuberosum</name>
    <name type="common">Potato</name>
    <dbReference type="NCBI Taxonomy" id="4113"/>
</organismHost>
<organismHost>
    <name type="scientific">Spinacia oleracea</name>
    <name type="common">Spinach</name>
    <dbReference type="NCBI Taxonomy" id="3562"/>
</organismHost>
<organismHost>
    <name type="scientific">Stellaria media</name>
    <name type="common">Common chickweed</name>
    <name type="synonym">Alsine media</name>
    <dbReference type="NCBI Taxonomy" id="13274"/>
</organismHost>
<organismHost>
    <name type="scientific">Tulipa</name>
    <dbReference type="NCBI Taxonomy" id="13305"/>
</organismHost>
<organismHost>
    <name type="scientific">Viola arvensis</name>
    <name type="common">European field pansy</name>
    <name type="synonym">Field violet</name>
    <dbReference type="NCBI Taxonomy" id="97415"/>
</organismHost>
<reference key="1">
    <citation type="journal article" date="1985" name="Nucleic Acids Res.">
        <title>The nucleotide sequence of tobacco rattle virus RNA-2 (CAM strain).</title>
        <authorList>
            <person name="Bergh S.T."/>
            <person name="Koziel M.G."/>
            <person name="Huang S.-C."/>
            <person name="Thomas R.A."/>
            <person name="Gilley D.P."/>
            <person name="Siegel A."/>
        </authorList>
    </citation>
    <scope>NUCLEOTIDE SEQUENCE [GENOMIC RNA]</scope>
</reference>
<feature type="chain" id="PRO_0000222504" description="Coat protein">
    <location>
        <begin position="1"/>
        <end position="223"/>
    </location>
</feature>
<feature type="region of interest" description="Disordered" evidence="1">
    <location>
        <begin position="117"/>
        <end position="136"/>
    </location>
</feature>
<feature type="region of interest" description="Disordered" evidence="1">
    <location>
        <begin position="181"/>
        <end position="223"/>
    </location>
</feature>
<feature type="compositionally biased region" description="Low complexity" evidence="1">
    <location>
        <begin position="202"/>
        <end position="216"/>
    </location>
</feature>
<keyword id="KW-0167">Capsid protein</keyword>
<keyword id="KW-1185">Reference proteome</keyword>
<keyword id="KW-0946">Virion</keyword>
<name>COAT_TRVCA</name>
<proteinExistence type="predicted"/>
<accession>P05070</accession>
<comment type="subcellular location">
    <subcellularLocation>
        <location evidence="2">Virion</location>
    </subcellularLocation>
</comment>
<evidence type="ECO:0000256" key="1">
    <source>
        <dbReference type="SAM" id="MobiDB-lite"/>
    </source>
</evidence>
<evidence type="ECO:0000305" key="2"/>
<protein>
    <recommendedName>
        <fullName>Coat protein</fullName>
    </recommendedName>
    <alternativeName>
        <fullName>Capsid protein</fullName>
    </alternativeName>
</protein>
<sequence>MAMYDDEFDTKASDLTFSPWVEVENWKDVTTRLRAIKFALQADRDKIPGVLSDLKTNCPYSAFKRFPDKSLYSVLSKEAVIAVAQIQSASGFKRRADEKNAVSGLVSVTPTQISQSASSSAATPVGLATVKPPRESDSAFQEDTFSYAKFDDASTAFHKALAYLEGLSLRPTYRRKFEKDMNVKWGGSGSAPSGAPAGGSSGSAPPTSGSSGSGAAPTPPPNP</sequence>
<organism>
    <name type="scientific">Tobacco rattle virus (strain CAM)</name>
    <dbReference type="NCBI Taxonomy" id="12296"/>
    <lineage>
        <taxon>Viruses</taxon>
        <taxon>Riboviria</taxon>
        <taxon>Orthornavirae</taxon>
        <taxon>Kitrinoviricota</taxon>
        <taxon>Alsuviricetes</taxon>
        <taxon>Martellivirales</taxon>
        <taxon>Virgaviridae</taxon>
        <taxon>Tobravirus</taxon>
        <taxon>Pepper ringspot virus</taxon>
    </lineage>
</organism>
<dbReference type="EMBL" id="X03241">
    <property type="protein sequence ID" value="CAA26998.1"/>
    <property type="molecule type" value="Genomic_RNA"/>
</dbReference>
<dbReference type="PIR" id="A26027">
    <property type="entry name" value="VCBVCA"/>
</dbReference>
<dbReference type="RefSeq" id="NP_620037.1">
    <property type="nucleotide sequence ID" value="NC_003670.1"/>
</dbReference>
<dbReference type="SMR" id="P05070"/>
<dbReference type="GeneID" id="991096"/>
<dbReference type="KEGG" id="vg:991096"/>
<dbReference type="Proteomes" id="UP000217252">
    <property type="component" value="Genome"/>
</dbReference>
<dbReference type="GO" id="GO:0019028">
    <property type="term" value="C:viral capsid"/>
    <property type="evidence" value="ECO:0007669"/>
    <property type="project" value="UniProtKB-KW"/>
</dbReference>
<dbReference type="GO" id="GO:0005198">
    <property type="term" value="F:structural molecule activity"/>
    <property type="evidence" value="ECO:0007669"/>
    <property type="project" value="InterPro"/>
</dbReference>
<dbReference type="Gene3D" id="1.20.120.70">
    <property type="entry name" value="Tobacco mosaic virus-like, coat protein"/>
    <property type="match status" value="1"/>
</dbReference>
<dbReference type="InterPro" id="IPR001337">
    <property type="entry name" value="TMV-like_coat"/>
</dbReference>
<dbReference type="InterPro" id="IPR036417">
    <property type="entry name" value="TMV-like_coat_sf"/>
</dbReference>
<dbReference type="Pfam" id="PF00721">
    <property type="entry name" value="TMV_coat"/>
    <property type="match status" value="1"/>
</dbReference>
<dbReference type="SUPFAM" id="SSF47195">
    <property type="entry name" value="TMV-like viral coat proteins"/>
    <property type="match status" value="1"/>
</dbReference>